<organism>
    <name type="scientific">Pyropia yezoensis</name>
    <name type="common">Susabi-nori</name>
    <name type="synonym">Porphyra yezoensis</name>
    <dbReference type="NCBI Taxonomy" id="2788"/>
    <lineage>
        <taxon>Eukaryota</taxon>
        <taxon>Rhodophyta</taxon>
        <taxon>Bangiophyceae</taxon>
        <taxon>Bangiales</taxon>
        <taxon>Bangiaceae</taxon>
        <taxon>Pyropia</taxon>
    </lineage>
</organism>
<accession>Q1XDL3</accession>
<proteinExistence type="inferred from homology"/>
<name>YCF36_PYRYE</name>
<reference key="1">
    <citation type="submission" date="2003-11" db="EMBL/GenBank/DDBJ databases">
        <title>Whole genome sequence of Porphyra yezoensis chloroplast.</title>
        <authorList>
            <person name="Kunimoto M."/>
            <person name="Morishima K."/>
            <person name="Yoshikawa M."/>
            <person name="Fukuda S."/>
            <person name="Kobayashi T."/>
            <person name="Kobayashi M."/>
            <person name="Okazaki T."/>
            <person name="Ohara I."/>
            <person name="Nakayama I."/>
        </authorList>
    </citation>
    <scope>NUCLEOTIDE SEQUENCE [LARGE SCALE GENOMIC DNA]</scope>
    <source>
        <strain>U-51</strain>
    </source>
</reference>
<keyword id="KW-0150">Chloroplast</keyword>
<keyword id="KW-0934">Plastid</keyword>
<dbReference type="EMBL" id="AP006715">
    <property type="protein sequence ID" value="BAE92398.1"/>
    <property type="molecule type" value="Genomic_DNA"/>
</dbReference>
<dbReference type="RefSeq" id="YP_536955.1">
    <property type="nucleotide sequence ID" value="NC_007932.1"/>
</dbReference>
<dbReference type="GO" id="GO:0009507">
    <property type="term" value="C:chloroplast"/>
    <property type="evidence" value="ECO:0007669"/>
    <property type="project" value="UniProtKB-SubCell"/>
</dbReference>
<dbReference type="InterPro" id="IPR009631">
    <property type="entry name" value="CGLD27-like"/>
</dbReference>
<dbReference type="PANTHER" id="PTHR34214">
    <property type="match status" value="1"/>
</dbReference>
<dbReference type="PANTHER" id="PTHR34214:SF3">
    <property type="entry name" value="PROTEIN CONSERVED IN THE GREEN LINEAGE AND DIATOMS 27, CHLOROPLASTIC"/>
    <property type="match status" value="1"/>
</dbReference>
<dbReference type="Pfam" id="PF06799">
    <property type="entry name" value="CGLD27-like"/>
    <property type="match status" value="1"/>
</dbReference>
<feature type="chain" id="PRO_0000277275" description="Uncharacterized protein ycf36">
    <location>
        <begin position="1"/>
        <end position="165"/>
    </location>
</feature>
<geneLocation type="chloroplast"/>
<protein>
    <recommendedName>
        <fullName>Uncharacterized protein ycf36</fullName>
    </recommendedName>
</protein>
<gene>
    <name type="primary">ycf36</name>
</gene>
<comment type="subcellular location">
    <subcellularLocation>
        <location>Plastid</location>
        <location>Chloroplast</location>
    </subcellularLocation>
</comment>
<comment type="similarity">
    <text evidence="1">Belongs to the ycf36 family.</text>
</comment>
<sequence>MNLYNTQCPVPKEQQPVHEYTSLKNSWFFCWPTLSRRSYNKKITIALLLNCLLVSPILLSIFPITKLPLKFFFSEFITSSLMTGFILIRLYLGWSYVVKRLMSATVFYEESGWYDGQIWVKPSEILLKDRFIGLYEVFPLLNKIKNTLSFLSLMISGPVLLFFYF</sequence>
<evidence type="ECO:0000305" key="1"/>